<keyword id="KW-1185">Reference proteome</keyword>
<organism>
    <name type="scientific">Dictyostelium discoideum</name>
    <name type="common">Social amoeba</name>
    <dbReference type="NCBI Taxonomy" id="44689"/>
    <lineage>
        <taxon>Eukaryota</taxon>
        <taxon>Amoebozoa</taxon>
        <taxon>Evosea</taxon>
        <taxon>Eumycetozoa</taxon>
        <taxon>Dictyostelia</taxon>
        <taxon>Dictyosteliales</taxon>
        <taxon>Dictyosteliaceae</taxon>
        <taxon>Dictyostelium</taxon>
    </lineage>
</organism>
<dbReference type="EMBL" id="AAFI02000054">
    <property type="protein sequence ID" value="EAL65755.1"/>
    <property type="molecule type" value="Genomic_DNA"/>
</dbReference>
<dbReference type="RefSeq" id="XP_639110.1">
    <property type="nucleotide sequence ID" value="XM_634018.1"/>
</dbReference>
<dbReference type="GlyGen" id="Q54R73">
    <property type="glycosylation" value="2 sites"/>
</dbReference>
<dbReference type="PaxDb" id="44689-DDB0302625"/>
<dbReference type="EnsemblProtists" id="EAL65755">
    <property type="protein sequence ID" value="EAL65755"/>
    <property type="gene ID" value="DDB_G0283357"/>
</dbReference>
<dbReference type="GeneID" id="8624043"/>
<dbReference type="KEGG" id="ddi:DDB_G0283357"/>
<dbReference type="dictyBase" id="DDB_G0283357"/>
<dbReference type="VEuPathDB" id="AmoebaDB:DDB_G0283357"/>
<dbReference type="eggNOG" id="ENOG502RSU4">
    <property type="taxonomic scope" value="Eukaryota"/>
</dbReference>
<dbReference type="HOGENOM" id="CLU_266139_0_0_1"/>
<dbReference type="InParanoid" id="Q54R73"/>
<dbReference type="OMA" id="NGYEVYC"/>
<dbReference type="PRO" id="PR:Q54R73"/>
<dbReference type="Proteomes" id="UP000002195">
    <property type="component" value="Chromosome 4"/>
</dbReference>
<dbReference type="GO" id="GO:0016592">
    <property type="term" value="C:mediator complex"/>
    <property type="evidence" value="ECO:0000318"/>
    <property type="project" value="GO_Central"/>
</dbReference>
<dbReference type="GO" id="GO:0003713">
    <property type="term" value="F:transcription coactivator activity"/>
    <property type="evidence" value="ECO:0000318"/>
    <property type="project" value="GO_Central"/>
</dbReference>
<dbReference type="GO" id="GO:0045944">
    <property type="term" value="P:positive regulation of transcription by RNA polymerase II"/>
    <property type="evidence" value="ECO:0000318"/>
    <property type="project" value="GO_Central"/>
</dbReference>
<dbReference type="InterPro" id="IPR052828">
    <property type="entry name" value="NELF-A_domain"/>
</dbReference>
<dbReference type="PANTHER" id="PTHR13328:SF4">
    <property type="entry name" value="NEGATIVE ELONGATION FACTOR A"/>
    <property type="match status" value="1"/>
</dbReference>
<dbReference type="PANTHER" id="PTHR13328">
    <property type="entry name" value="NEGATIVE ELONGATION FACTOR A NELF-A"/>
    <property type="match status" value="1"/>
</dbReference>
<reference key="1">
    <citation type="journal article" date="2005" name="Nature">
        <title>The genome of the social amoeba Dictyostelium discoideum.</title>
        <authorList>
            <person name="Eichinger L."/>
            <person name="Pachebat J.A."/>
            <person name="Gloeckner G."/>
            <person name="Rajandream M.A."/>
            <person name="Sucgang R."/>
            <person name="Berriman M."/>
            <person name="Song J."/>
            <person name="Olsen R."/>
            <person name="Szafranski K."/>
            <person name="Xu Q."/>
            <person name="Tunggal B."/>
            <person name="Kummerfeld S."/>
            <person name="Madera M."/>
            <person name="Konfortov B.A."/>
            <person name="Rivero F."/>
            <person name="Bankier A.T."/>
            <person name="Lehmann R."/>
            <person name="Hamlin N."/>
            <person name="Davies R."/>
            <person name="Gaudet P."/>
            <person name="Fey P."/>
            <person name="Pilcher K."/>
            <person name="Chen G."/>
            <person name="Saunders D."/>
            <person name="Sodergren E.J."/>
            <person name="Davis P."/>
            <person name="Kerhornou A."/>
            <person name="Nie X."/>
            <person name="Hall N."/>
            <person name="Anjard C."/>
            <person name="Hemphill L."/>
            <person name="Bason N."/>
            <person name="Farbrother P."/>
            <person name="Desany B."/>
            <person name="Just E."/>
            <person name="Morio T."/>
            <person name="Rost R."/>
            <person name="Churcher C.M."/>
            <person name="Cooper J."/>
            <person name="Haydock S."/>
            <person name="van Driessche N."/>
            <person name="Cronin A."/>
            <person name="Goodhead I."/>
            <person name="Muzny D.M."/>
            <person name="Mourier T."/>
            <person name="Pain A."/>
            <person name="Lu M."/>
            <person name="Harper D."/>
            <person name="Lindsay R."/>
            <person name="Hauser H."/>
            <person name="James K.D."/>
            <person name="Quiles M."/>
            <person name="Madan Babu M."/>
            <person name="Saito T."/>
            <person name="Buchrieser C."/>
            <person name="Wardroper A."/>
            <person name="Felder M."/>
            <person name="Thangavelu M."/>
            <person name="Johnson D."/>
            <person name="Knights A."/>
            <person name="Loulseged H."/>
            <person name="Mungall K.L."/>
            <person name="Oliver K."/>
            <person name="Price C."/>
            <person name="Quail M.A."/>
            <person name="Urushihara H."/>
            <person name="Hernandez J."/>
            <person name="Rabbinowitsch E."/>
            <person name="Steffen D."/>
            <person name="Sanders M."/>
            <person name="Ma J."/>
            <person name="Kohara Y."/>
            <person name="Sharp S."/>
            <person name="Simmonds M.N."/>
            <person name="Spiegler S."/>
            <person name="Tivey A."/>
            <person name="Sugano S."/>
            <person name="White B."/>
            <person name="Walker D."/>
            <person name="Woodward J.R."/>
            <person name="Winckler T."/>
            <person name="Tanaka Y."/>
            <person name="Shaulsky G."/>
            <person name="Schleicher M."/>
            <person name="Weinstock G.M."/>
            <person name="Rosenthal A."/>
            <person name="Cox E.C."/>
            <person name="Chisholm R.L."/>
            <person name="Gibbs R.A."/>
            <person name="Loomis W.F."/>
            <person name="Platzer M."/>
            <person name="Kay R.R."/>
            <person name="Williams J.G."/>
            <person name="Dear P.H."/>
            <person name="Noegel A.A."/>
            <person name="Barrell B.G."/>
            <person name="Kuspa A."/>
        </authorList>
    </citation>
    <scope>NUCLEOTIDE SEQUENCE [LARGE SCALE GENOMIC DNA]</scope>
    <source>
        <strain>AX4</strain>
    </source>
</reference>
<accession>Q54R73</accession>
<proteinExistence type="predicted"/>
<sequence length="1247" mass="138205">MDSPIFSNDIDSIKNNTYQAKSYQKYNNSNNYNNNNNNSFNNYSNGSNYGGYNNSGNNSNYNNNNNLYNNNNINNNNNNNNNNNINNNNNNINNNNNINNNNSNNNNNNNNNNSNSNNSINSNSYKVNTPTQNGKSSHSPPLINANANVVFPTFKSLDLSSDTVNSVGAANNGSSNSSPTINGISNSNTMNNNNNNNNNNNNNSNSSNNNNNGNNNNNNNYNSFVNITKNNNNTNSNNYNNSTNSNNNGYNNNNNNNSISNSNSNSNSNSNSNSNSNSNSNSNSNSNSNSNSNSSSNSSSSSNNNNNNNNNNNNNNNSSSSSSNSNGNNNNNYHSYGYSNSKYNQQKSYNNAPHQLNSGGGQNSYYNKNNYNNGNGNIGNGNNSGSGNSSNSNGWSGGYQKQNGANRYQSQSQQQPQQQQQQQPQQPQQPQQQQQQQQQQQQQQQQQQQQQQQQQQQQQQQQQQQQQQQQQQQQPPQQQQQQQQDIGDSSRMNGGSRVPKAPGSDIGFNRGLNNSLNGQTDLNNSNYNSNSNNNNTNNNNTNNNLVNGKLQHYNYNNSSFKFNKNAQYNNGNNNGNNNNNNNNNNNNNNNNNNNSNNNSTNNNNINNSGNNNISNSVSSNSNGNVGSNPHRFQKNHFEKPFNSNSSTPSTPPNSTPSSSTTTSPSSSFNTYSNTFNNGSSNSFNNGSFNNSFNNGSSSNGSFNHGSFNNGSSISSFSGSFNNGSSGSGFNASFNGGSNSNSFNNGDNNNNNNNNNNNNHHNNDIDDSEPIIDQLDSTGEEEMDNLIGKLDLFSTKSESLFHTWKLNYSNRNNNNNNNSNNNNNNNNSSNNNSNSNNNNDNNNNDSFDGSNSDSQNIETDRTTTKVYITGKNFNNHNNNNNNNNNNNNHHYNNNNNNNNNNNNNNNNNNNNNNNNNNNNNNNNNNENNNGDVFSNGFSTWTPKSGSNSLNNSQNNLSNGQNSSNNSQNNLNNSQNSLNSSGNHHSNYHGHNNHHHYNNNNNNNNNNNNNNNNNNNNNNNGNGYVKSYYNNKYQQKSPQHQSSNSVVLIPPPGFSTIAPPPGFSTNNNNNNNNNNNNNNNKNNNSNNNNIIEVGKANYQTSTLNNSQDDSYQQEQEQQEQESQQQQQQQQQQQQQQQQQQQQQQQQQNYSSTPPNITPHLKGDGGLEKWFGNNIYSFGASQSLNNENTNPSYSYVPYNNNNNNNNNFNNINNDNNDNDIINNNHQQTNPSLQNDTPPIKMLSLEEIERW</sequence>
<name>Y5465_DICDI</name>
<feature type="chain" id="PRO_0000351255" description="Uncharacterized protein DDB_G0283357">
    <location>
        <begin position="1"/>
        <end position="1247"/>
    </location>
</feature>
<feature type="region of interest" description="Disordered" evidence="1">
    <location>
        <begin position="25"/>
        <end position="141"/>
    </location>
</feature>
<feature type="region of interest" description="Disordered" evidence="1">
    <location>
        <begin position="169"/>
        <end position="431"/>
    </location>
</feature>
<feature type="region of interest" description="Disordered" evidence="1">
    <location>
        <begin position="472"/>
        <end position="667"/>
    </location>
</feature>
<feature type="region of interest" description="Disordered" evidence="1">
    <location>
        <begin position="738"/>
        <end position="770"/>
    </location>
</feature>
<feature type="region of interest" description="Disordered" evidence="1">
    <location>
        <begin position="807"/>
        <end position="857"/>
    </location>
</feature>
<feature type="region of interest" description="Disordered" evidence="1">
    <location>
        <begin position="869"/>
        <end position="1087"/>
    </location>
</feature>
<feature type="region of interest" description="Disordered" evidence="1">
    <location>
        <begin position="1099"/>
        <end position="1122"/>
    </location>
</feature>
<feature type="region of interest" description="Disordered" evidence="1">
    <location>
        <begin position="1139"/>
        <end position="1162"/>
    </location>
</feature>
<feature type="compositionally biased region" description="Low complexity" evidence="1">
    <location>
        <begin position="26"/>
        <end position="125"/>
    </location>
</feature>
<feature type="compositionally biased region" description="Polar residues" evidence="1">
    <location>
        <begin position="126"/>
        <end position="139"/>
    </location>
</feature>
<feature type="compositionally biased region" description="Low complexity" evidence="1">
    <location>
        <begin position="169"/>
        <end position="178"/>
    </location>
</feature>
<feature type="compositionally biased region" description="Low complexity" evidence="1">
    <location>
        <begin position="185"/>
        <end position="223"/>
    </location>
</feature>
<feature type="compositionally biased region" description="Low complexity" evidence="1">
    <location>
        <begin position="230"/>
        <end position="341"/>
    </location>
</feature>
<feature type="compositionally biased region" description="Polar residues" evidence="1">
    <location>
        <begin position="342"/>
        <end position="356"/>
    </location>
</feature>
<feature type="compositionally biased region" description="Low complexity" evidence="1">
    <location>
        <begin position="363"/>
        <end position="375"/>
    </location>
</feature>
<feature type="compositionally biased region" description="Low complexity" evidence="1">
    <location>
        <begin position="385"/>
        <end position="394"/>
    </location>
</feature>
<feature type="compositionally biased region" description="Low complexity" evidence="1">
    <location>
        <begin position="409"/>
        <end position="431"/>
    </location>
</feature>
<feature type="compositionally biased region" description="Low complexity" evidence="1">
    <location>
        <begin position="472"/>
        <end position="484"/>
    </location>
</feature>
<feature type="compositionally biased region" description="Polar residues" evidence="1">
    <location>
        <begin position="511"/>
        <end position="522"/>
    </location>
</feature>
<feature type="compositionally biased region" description="Low complexity" evidence="1">
    <location>
        <begin position="523"/>
        <end position="544"/>
    </location>
</feature>
<feature type="compositionally biased region" description="Low complexity" evidence="1">
    <location>
        <begin position="553"/>
        <end position="628"/>
    </location>
</feature>
<feature type="compositionally biased region" description="Low complexity" evidence="1">
    <location>
        <begin position="655"/>
        <end position="667"/>
    </location>
</feature>
<feature type="compositionally biased region" description="Low complexity" evidence="1">
    <location>
        <begin position="738"/>
        <end position="759"/>
    </location>
</feature>
<feature type="compositionally biased region" description="Low complexity" evidence="1">
    <location>
        <begin position="807"/>
        <end position="855"/>
    </location>
</feature>
<feature type="compositionally biased region" description="Low complexity" evidence="1">
    <location>
        <begin position="871"/>
        <end position="928"/>
    </location>
</feature>
<feature type="compositionally biased region" description="Polar residues" evidence="1">
    <location>
        <begin position="929"/>
        <end position="942"/>
    </location>
</feature>
<feature type="compositionally biased region" description="Low complexity" evidence="1">
    <location>
        <begin position="943"/>
        <end position="983"/>
    </location>
</feature>
<feature type="compositionally biased region" description="Basic residues" evidence="1">
    <location>
        <begin position="984"/>
        <end position="995"/>
    </location>
</feature>
<feature type="compositionally biased region" description="Low complexity" evidence="1">
    <location>
        <begin position="996"/>
        <end position="1021"/>
    </location>
</feature>
<feature type="compositionally biased region" description="Polar residues" evidence="1">
    <location>
        <begin position="1026"/>
        <end position="1044"/>
    </location>
</feature>
<feature type="compositionally biased region" description="Pro residues" evidence="1">
    <location>
        <begin position="1047"/>
        <end position="1060"/>
    </location>
</feature>
<feature type="compositionally biased region" description="Low complexity" evidence="1">
    <location>
        <begin position="1064"/>
        <end position="1087"/>
    </location>
</feature>
<feature type="compositionally biased region" description="Polar residues" evidence="1">
    <location>
        <begin position="1099"/>
        <end position="1108"/>
    </location>
</feature>
<feature type="compositionally biased region" description="Low complexity" evidence="1">
    <location>
        <begin position="1110"/>
        <end position="1122"/>
    </location>
</feature>
<protein>
    <recommendedName>
        <fullName>Uncharacterized protein DDB_G0283357</fullName>
    </recommendedName>
</protein>
<evidence type="ECO:0000256" key="1">
    <source>
        <dbReference type="SAM" id="MobiDB-lite"/>
    </source>
</evidence>
<gene>
    <name type="ORF">DDB_G0283357</name>
</gene>